<evidence type="ECO:0000250" key="1"/>
<evidence type="ECO:0000305" key="2"/>
<name>TRMD_MYCLE</name>
<keyword id="KW-0963">Cytoplasm</keyword>
<keyword id="KW-0489">Methyltransferase</keyword>
<keyword id="KW-1185">Reference proteome</keyword>
<keyword id="KW-0949">S-adenosyl-L-methionine</keyword>
<keyword id="KW-0808">Transferase</keyword>
<keyword id="KW-0819">tRNA processing</keyword>
<feature type="chain" id="PRO_0000060408" description="tRNA (guanine-N(1)-)-methyltransferase">
    <location>
        <begin position="1"/>
        <end position="238"/>
    </location>
</feature>
<feature type="binding site" evidence="1">
    <location>
        <position position="109"/>
    </location>
    <ligand>
        <name>S-adenosyl-L-methionine</name>
        <dbReference type="ChEBI" id="CHEBI:59789"/>
    </ligand>
</feature>
<feature type="binding site" evidence="1">
    <location>
        <begin position="133"/>
        <end position="138"/>
    </location>
    <ligand>
        <name>S-adenosyl-L-methionine</name>
        <dbReference type="ChEBI" id="CHEBI:59789"/>
    </ligand>
</feature>
<sequence length="238" mass="26229">MKIDIVTIFPAYLDPLRQSLPGKAIESGLVDVQVHDLRRWTHDVHHSVDDVPYGGGPGMVMKAPVWGEALDEICFDETLLVIPTPAGALFTQATAQCWSTERHLVFACGRYEGIDQRVVDDAVRRMRVEEVSIGDYVLPGGESAAVVMIEAVLRLVAGVLGNPASHRDDSHSPDLGRLLEGPSYTRPPTWRGLDVPPVLLSGDHARIAAWRREASLRRTRKRRPDLSGARFVWGLGLS</sequence>
<organism>
    <name type="scientific">Mycobacterium leprae (strain TN)</name>
    <dbReference type="NCBI Taxonomy" id="272631"/>
    <lineage>
        <taxon>Bacteria</taxon>
        <taxon>Bacillati</taxon>
        <taxon>Actinomycetota</taxon>
        <taxon>Actinomycetes</taxon>
        <taxon>Mycobacteriales</taxon>
        <taxon>Mycobacteriaceae</taxon>
        <taxon>Mycobacterium</taxon>
    </lineage>
</organism>
<reference key="1">
    <citation type="journal article" date="2001" name="Nature">
        <title>Massive gene decay in the leprosy bacillus.</title>
        <authorList>
            <person name="Cole S.T."/>
            <person name="Eiglmeier K."/>
            <person name="Parkhill J."/>
            <person name="James K.D."/>
            <person name="Thomson N.R."/>
            <person name="Wheeler P.R."/>
            <person name="Honore N."/>
            <person name="Garnier T."/>
            <person name="Churcher C.M."/>
            <person name="Harris D.E."/>
            <person name="Mungall K.L."/>
            <person name="Basham D."/>
            <person name="Brown D."/>
            <person name="Chillingworth T."/>
            <person name="Connor R."/>
            <person name="Davies R.M."/>
            <person name="Devlin K."/>
            <person name="Duthoy S."/>
            <person name="Feltwell T."/>
            <person name="Fraser A."/>
            <person name="Hamlin N."/>
            <person name="Holroyd S."/>
            <person name="Hornsby T."/>
            <person name="Jagels K."/>
            <person name="Lacroix C."/>
            <person name="Maclean J."/>
            <person name="Moule S."/>
            <person name="Murphy L.D."/>
            <person name="Oliver K."/>
            <person name="Quail M.A."/>
            <person name="Rajandream M.A."/>
            <person name="Rutherford K.M."/>
            <person name="Rutter S."/>
            <person name="Seeger K."/>
            <person name="Simon S."/>
            <person name="Simmonds M."/>
            <person name="Skelton J."/>
            <person name="Squares R."/>
            <person name="Squares S."/>
            <person name="Stevens K."/>
            <person name="Taylor K."/>
            <person name="Whitehead S."/>
            <person name="Woodward J.R."/>
            <person name="Barrell B.G."/>
        </authorList>
    </citation>
    <scope>NUCLEOTIDE SEQUENCE [LARGE SCALE GENOMIC DNA]</scope>
    <source>
        <strain>TN</strain>
    </source>
</reference>
<accession>O33017</accession>
<proteinExistence type="inferred from homology"/>
<protein>
    <recommendedName>
        <fullName>tRNA (guanine-N(1)-)-methyltransferase</fullName>
        <ecNumber>2.1.1.228</ecNumber>
    </recommendedName>
    <alternativeName>
        <fullName>M1G-methyltransferase</fullName>
    </alternativeName>
    <alternativeName>
        <fullName>tRNA [GM37] methyltransferase</fullName>
    </alternativeName>
</protein>
<comment type="function">
    <text evidence="1">Specifically methylates guanosine-37 in various tRNAs.</text>
</comment>
<comment type="catalytic activity">
    <reaction>
        <text>guanosine(37) in tRNA + S-adenosyl-L-methionine = N(1)-methylguanosine(37) in tRNA + S-adenosyl-L-homocysteine + H(+)</text>
        <dbReference type="Rhea" id="RHEA:36899"/>
        <dbReference type="Rhea" id="RHEA-COMP:10145"/>
        <dbReference type="Rhea" id="RHEA-COMP:10147"/>
        <dbReference type="ChEBI" id="CHEBI:15378"/>
        <dbReference type="ChEBI" id="CHEBI:57856"/>
        <dbReference type="ChEBI" id="CHEBI:59789"/>
        <dbReference type="ChEBI" id="CHEBI:73542"/>
        <dbReference type="ChEBI" id="CHEBI:74269"/>
        <dbReference type="EC" id="2.1.1.228"/>
    </reaction>
</comment>
<comment type="subunit">
    <text evidence="1">Homodimer.</text>
</comment>
<comment type="subcellular location">
    <subcellularLocation>
        <location evidence="2">Cytoplasm</location>
    </subcellularLocation>
</comment>
<comment type="similarity">
    <text evidence="2">Belongs to the RNA methyltransferase TrmD family.</text>
</comment>
<dbReference type="EC" id="2.1.1.228"/>
<dbReference type="EMBL" id="Z97369">
    <property type="protein sequence ID" value="CAB10629.1"/>
    <property type="molecule type" value="Genomic_DNA"/>
</dbReference>
<dbReference type="EMBL" id="AL583922">
    <property type="protein sequence ID" value="CAC30566.1"/>
    <property type="molecule type" value="Genomic_DNA"/>
</dbReference>
<dbReference type="PIR" id="A87111">
    <property type="entry name" value="A87111"/>
</dbReference>
<dbReference type="RefSeq" id="NP_302113.1">
    <property type="nucleotide sequence ID" value="NC_002677.1"/>
</dbReference>
<dbReference type="RefSeq" id="WP_010908434.1">
    <property type="nucleotide sequence ID" value="NC_002677.1"/>
</dbReference>
<dbReference type="SMR" id="O33017"/>
<dbReference type="STRING" id="272631.gene:17575456"/>
<dbReference type="KEGG" id="mle:ML1615"/>
<dbReference type="PATRIC" id="fig|272631.5.peg.3041"/>
<dbReference type="Leproma" id="ML1615"/>
<dbReference type="eggNOG" id="COG0336">
    <property type="taxonomic scope" value="Bacteria"/>
</dbReference>
<dbReference type="HOGENOM" id="CLU_047363_0_0_11"/>
<dbReference type="OrthoDB" id="9807416at2"/>
<dbReference type="Proteomes" id="UP000000806">
    <property type="component" value="Chromosome"/>
</dbReference>
<dbReference type="GO" id="GO:0005829">
    <property type="term" value="C:cytosol"/>
    <property type="evidence" value="ECO:0007669"/>
    <property type="project" value="TreeGrafter"/>
</dbReference>
<dbReference type="GO" id="GO:0052906">
    <property type="term" value="F:tRNA (guanine(37)-N1)-methyltransferase activity"/>
    <property type="evidence" value="ECO:0007669"/>
    <property type="project" value="UniProtKB-UniRule"/>
</dbReference>
<dbReference type="GO" id="GO:0002939">
    <property type="term" value="P:tRNA N1-guanine methylation"/>
    <property type="evidence" value="ECO:0007669"/>
    <property type="project" value="TreeGrafter"/>
</dbReference>
<dbReference type="CDD" id="cd18080">
    <property type="entry name" value="TrmD-like"/>
    <property type="match status" value="1"/>
</dbReference>
<dbReference type="FunFam" id="1.10.1270.20:FF:000004">
    <property type="entry name" value="tRNA (guanine-N(1)-)-methyltransferase"/>
    <property type="match status" value="1"/>
</dbReference>
<dbReference type="FunFam" id="3.40.1280.10:FF:000001">
    <property type="entry name" value="tRNA (guanine-N(1)-)-methyltransferase"/>
    <property type="match status" value="1"/>
</dbReference>
<dbReference type="Gene3D" id="3.40.1280.10">
    <property type="match status" value="1"/>
</dbReference>
<dbReference type="Gene3D" id="1.10.1270.20">
    <property type="entry name" value="tRNA(m1g37)methyltransferase, domain 2"/>
    <property type="match status" value="1"/>
</dbReference>
<dbReference type="HAMAP" id="MF_00605">
    <property type="entry name" value="TrmD"/>
    <property type="match status" value="1"/>
</dbReference>
<dbReference type="InterPro" id="IPR029028">
    <property type="entry name" value="Alpha/beta_knot_MTases"/>
</dbReference>
<dbReference type="InterPro" id="IPR023148">
    <property type="entry name" value="tRNA_m1G_MeTrfase_C_sf"/>
</dbReference>
<dbReference type="InterPro" id="IPR002649">
    <property type="entry name" value="tRNA_m1G_MeTrfase_TrmD"/>
</dbReference>
<dbReference type="InterPro" id="IPR029026">
    <property type="entry name" value="tRNA_m1G_MTases_N"/>
</dbReference>
<dbReference type="InterPro" id="IPR016009">
    <property type="entry name" value="tRNA_MeTrfase_TRMD/TRM10"/>
</dbReference>
<dbReference type="NCBIfam" id="NF000648">
    <property type="entry name" value="PRK00026.1"/>
    <property type="match status" value="1"/>
</dbReference>
<dbReference type="NCBIfam" id="TIGR00088">
    <property type="entry name" value="trmD"/>
    <property type="match status" value="1"/>
</dbReference>
<dbReference type="PANTHER" id="PTHR46417">
    <property type="entry name" value="TRNA (GUANINE-N(1)-)-METHYLTRANSFERASE"/>
    <property type="match status" value="1"/>
</dbReference>
<dbReference type="PANTHER" id="PTHR46417:SF1">
    <property type="entry name" value="TRNA (GUANINE-N(1)-)-METHYLTRANSFERASE"/>
    <property type="match status" value="1"/>
</dbReference>
<dbReference type="Pfam" id="PF01746">
    <property type="entry name" value="tRNA_m1G_MT"/>
    <property type="match status" value="1"/>
</dbReference>
<dbReference type="PIRSF" id="PIRSF000386">
    <property type="entry name" value="tRNA_mtase"/>
    <property type="match status" value="1"/>
</dbReference>
<dbReference type="SUPFAM" id="SSF75217">
    <property type="entry name" value="alpha/beta knot"/>
    <property type="match status" value="1"/>
</dbReference>
<gene>
    <name type="primary">trmD</name>
    <name type="ordered locus">ML1615</name>
    <name type="ORF">MLCB250.35</name>
</gene>